<keyword id="KW-0024">Alternative initiation</keyword>
<keyword id="KW-0167">Capsid protein</keyword>
<keyword id="KW-1176">Cytoplasmic inwards viral transport</keyword>
<keyword id="KW-0238">DNA-binding</keyword>
<keyword id="KW-1035">Host cytoplasm</keyword>
<keyword id="KW-0945">Host-virus interaction</keyword>
<keyword id="KW-1177">Microtubular inwards viral transport</keyword>
<keyword id="KW-0597">Phosphoprotein</keyword>
<keyword id="KW-0677">Repeat</keyword>
<keyword id="KW-0694">RNA-binding</keyword>
<keyword id="KW-1144">T=4 icosahedral capsid protein</keyword>
<keyword id="KW-1163">Viral penetration into host nucleus</keyword>
<keyword id="KW-0946">Virion</keyword>
<keyword id="KW-1160">Virus entry into host cell</keyword>
<feature type="chain" id="PRO_0000324355" description="Capsid protein">
    <location>
        <begin position="1"/>
        <end position="185"/>
    </location>
</feature>
<feature type="repeat" description="1; half-length">
    <location>
        <begin position="157"/>
        <end position="163"/>
    </location>
</feature>
<feature type="repeat" description="2">
    <location>
        <begin position="164"/>
        <end position="171"/>
    </location>
</feature>
<feature type="repeat" description="3">
    <location>
        <begin position="172"/>
        <end position="179"/>
    </location>
</feature>
<feature type="region of interest" description="Disordered" evidence="2">
    <location>
        <begin position="136"/>
        <end position="185"/>
    </location>
</feature>
<feature type="region of interest" description="3 X 8 AA repeats of S-P-R-R-R-[PR]-S-Q">
    <location>
        <begin position="157"/>
        <end position="179"/>
    </location>
</feature>
<feature type="region of interest" description="RNA binding" evidence="1">
    <location>
        <begin position="179"/>
        <end position="185"/>
    </location>
</feature>
<feature type="short sequence motif" description="Bipartite nuclear localization signal" evidence="1">
    <location>
        <begin position="160"/>
        <end position="177"/>
    </location>
</feature>
<feature type="compositionally biased region" description="Basic residues" evidence="2">
    <location>
        <begin position="149"/>
        <end position="178"/>
    </location>
</feature>
<feature type="modified residue" description="Phosphoserine; by host" evidence="1">
    <location>
        <position position="157"/>
    </location>
</feature>
<feature type="modified residue" description="Phosphoserine; by host" evidence="1">
    <location>
        <position position="164"/>
    </location>
</feature>
<feature type="modified residue" description="Phosphoserine; by host" evidence="1">
    <location>
        <position position="172"/>
    </location>
</feature>
<organismHost>
    <name type="scientific">Homo sapiens</name>
    <name type="common">Human</name>
    <dbReference type="NCBI Taxonomy" id="9606"/>
</organismHost>
<organismHost>
    <name type="scientific">Pan troglodytes</name>
    <name type="common">Chimpanzee</name>
    <dbReference type="NCBI Taxonomy" id="9598"/>
</organismHost>
<name>CAPSD_HBVA7</name>
<sequence>MDIDPYKEFGATVELLSFLPSDFFPSVRDLLDTASALYREALESPEHCSPHHTALRQAILCWVELMTLATWVGNNLQDPASRDLVVNYVNTNMGLKIRQLLWFHISCLTFGRETVLEYLVSFGVWIRTPPAYRPPNAPILSTLPETTVVRRRDRGRSPRRRTPSPRRRRSQSPRRRRSQSRESQC</sequence>
<evidence type="ECO:0000255" key="1">
    <source>
        <dbReference type="HAMAP-Rule" id="MF_04076"/>
    </source>
</evidence>
<evidence type="ECO:0000256" key="2">
    <source>
        <dbReference type="SAM" id="MobiDB-lite"/>
    </source>
</evidence>
<dbReference type="EMBL" id="AB014370">
    <property type="protein sequence ID" value="BAA32870.1"/>
    <property type="status" value="ALT_INIT"/>
    <property type="molecule type" value="Genomic_DNA"/>
</dbReference>
<dbReference type="SMR" id="P0C696"/>
<dbReference type="Proteomes" id="UP000007910">
    <property type="component" value="Genome"/>
</dbReference>
<dbReference type="GO" id="GO:0043657">
    <property type="term" value="C:host cell"/>
    <property type="evidence" value="ECO:0007669"/>
    <property type="project" value="GOC"/>
</dbReference>
<dbReference type="GO" id="GO:0030430">
    <property type="term" value="C:host cell cytoplasm"/>
    <property type="evidence" value="ECO:0007669"/>
    <property type="project" value="UniProtKB-SubCell"/>
</dbReference>
<dbReference type="GO" id="GO:0039619">
    <property type="term" value="C:T=4 icosahedral viral capsid"/>
    <property type="evidence" value="ECO:0007669"/>
    <property type="project" value="UniProtKB-UniRule"/>
</dbReference>
<dbReference type="GO" id="GO:0003677">
    <property type="term" value="F:DNA binding"/>
    <property type="evidence" value="ECO:0007669"/>
    <property type="project" value="UniProtKB-UniRule"/>
</dbReference>
<dbReference type="GO" id="GO:0003723">
    <property type="term" value="F:RNA binding"/>
    <property type="evidence" value="ECO:0007669"/>
    <property type="project" value="UniProtKB-UniRule"/>
</dbReference>
<dbReference type="GO" id="GO:0005198">
    <property type="term" value="F:structural molecule activity"/>
    <property type="evidence" value="ECO:0007669"/>
    <property type="project" value="UniProtKB-UniRule"/>
</dbReference>
<dbReference type="GO" id="GO:0075521">
    <property type="term" value="P:microtubule-dependent intracellular transport of viral material towards nucleus"/>
    <property type="evidence" value="ECO:0007669"/>
    <property type="project" value="UniProtKB-UniRule"/>
</dbReference>
<dbReference type="GO" id="GO:0046718">
    <property type="term" value="P:symbiont entry into host cell"/>
    <property type="evidence" value="ECO:0007669"/>
    <property type="project" value="UniProtKB-UniRule"/>
</dbReference>
<dbReference type="GO" id="GO:0075732">
    <property type="term" value="P:viral penetration into host nucleus"/>
    <property type="evidence" value="ECO:0007669"/>
    <property type="project" value="UniProtKB-UniRule"/>
</dbReference>
<dbReference type="FunFam" id="1.10.4090.10:FF:000001">
    <property type="entry name" value="Capsid protein"/>
    <property type="match status" value="1"/>
</dbReference>
<dbReference type="Gene3D" id="1.10.4090.10">
    <property type="entry name" value="Viral capsid, core domain supefamily, Hepatitis B virus"/>
    <property type="match status" value="1"/>
</dbReference>
<dbReference type="HAMAP" id="MF_04076">
    <property type="entry name" value="HBV_HBEAG"/>
    <property type="match status" value="1"/>
</dbReference>
<dbReference type="InterPro" id="IPR002006">
    <property type="entry name" value="Hepatitis_core"/>
</dbReference>
<dbReference type="InterPro" id="IPR036459">
    <property type="entry name" value="Viral_capsid_core_dom_sf_HBV"/>
</dbReference>
<dbReference type="Pfam" id="PF00906">
    <property type="entry name" value="Hepatitis_core"/>
    <property type="match status" value="2"/>
</dbReference>
<dbReference type="SUPFAM" id="SSF47852">
    <property type="entry name" value="Hepatitis B viral capsid (hbcag)"/>
    <property type="match status" value="1"/>
</dbReference>
<reference key="1">
    <citation type="journal article" date="1998" name="Arch. Virol.">
        <title>Hepatitis B virus genomic sequence in the circulation of hepatocellular carcinoma patients: comparative analysis of 40 full-length isolates.</title>
        <authorList>
            <person name="Takahashi K."/>
            <person name="Akahane Y."/>
            <person name="Hino K."/>
            <person name="Ohta Y."/>
            <person name="Mishiro S."/>
        </authorList>
    </citation>
    <scope>NUCLEOTIDE SEQUENCE [GENOMIC DNA]</scope>
</reference>
<proteinExistence type="inferred from homology"/>
<gene>
    <name evidence="1" type="primary">C</name>
</gene>
<protein>
    <recommendedName>
        <fullName evidence="1">Capsid protein</fullName>
    </recommendedName>
    <alternativeName>
        <fullName evidence="1">Core antigen</fullName>
    </alternativeName>
    <alternativeName>
        <fullName evidence="1">Core protein</fullName>
    </alternativeName>
    <alternativeName>
        <fullName evidence="1">HBcAg</fullName>
    </alternativeName>
    <alternativeName>
        <fullName evidence="1">p21.5</fullName>
    </alternativeName>
</protein>
<organism>
    <name type="scientific">Hepatitis B virus genotype A2 (isolate Japan/11D11HCCW/1998)</name>
    <name type="common">HBV-A</name>
    <dbReference type="NCBI Taxonomy" id="489457"/>
    <lineage>
        <taxon>Viruses</taxon>
        <taxon>Riboviria</taxon>
        <taxon>Pararnavirae</taxon>
        <taxon>Artverviricota</taxon>
        <taxon>Revtraviricetes</taxon>
        <taxon>Blubervirales</taxon>
        <taxon>Hepadnaviridae</taxon>
        <taxon>Orthohepadnavirus</taxon>
        <taxon>Hepatitis B virus</taxon>
    </lineage>
</organism>
<accession>P0C696</accession>
<comment type="function">
    <text evidence="1">Self assembles to form an icosahedral capsid. Most capsids appear to be large particles with an icosahedral symmetry of T=4 and consist of 240 copies of capsid protein, though a fraction forms smaller T=3 particles consisting of 180 capsid proteins. Entering capsids are transported along microtubules to the nucleus. Phosphorylation of the capsid is thought to induce exposure of nuclear localization signal in the C-terminal portion of the capsid protein that allows binding to the nuclear pore complex via the importin (karyopherin-) alpha and beta. Capsids are imported in intact form through the nuclear pore into the nuclear basket, where it probably binds NUP153. Only capsids that contain the mature viral genome can release the viral DNA and capsid protein into the nucleoplasm. Immature capsids get stuck in the basket. Capsids encapsulate the pre-genomic RNA and the P protein. Pre-genomic RNA is reverse-transcribed into DNA while the capsid is still in the cytoplasm. The capsid can then either be directed to the nucleus, providing more genomes for transcription, or bud through the endoplasmic reticulum to provide new virions.</text>
</comment>
<comment type="subunit">
    <text evidence="1">Homodimerizes, then multimerizes. Interacts with cytosol exposed regions of viral L glycoprotein present in the reticulum-to-Golgi compartment. Interacts with human FLNB. Phosphorylated form interacts with host importin alpha; this interaction depends on the exposure of the NLS, which itself depends upon genome maturation and/or phosphorylation of the capsid protein. Interacts with host NUP153.</text>
</comment>
<comment type="subcellular location">
    <subcellularLocation>
        <location evidence="1">Virion</location>
    </subcellularLocation>
    <subcellularLocation>
        <location evidence="1">Host cytoplasm</location>
    </subcellularLocation>
</comment>
<comment type="alternative products">
    <event type="alternative initiation"/>
    <isoform>
        <id>P0C696-1</id>
        <name>Capsid protein</name>
        <sequence type="displayed"/>
    </isoform>
    <isoform>
        <id>O91532-1</id>
        <name>External core antigen</name>
        <sequence type="external"/>
    </isoform>
</comment>
<comment type="PTM">
    <text evidence="1">Phosphorylated by host SRPK1, SRPK2, and maybe protein kinase C or GAPDH. Phosphorylation is critical for pregenomic RNA packaging. Protein kinase C phosphorylation is stimulated by HBx protein and may play a role in transport of the viral genome to the nucleus at the late step during the viral replication cycle.</text>
</comment>
<comment type="similarity">
    <text evidence="1">Belongs to the orthohepadnavirus core antigen family.</text>
</comment>
<comment type="sequence caution">
    <conflict type="erroneous initiation">
        <sequence resource="EMBL-CDS" id="BAA32870"/>
    </conflict>
</comment>